<evidence type="ECO:0000255" key="1">
    <source>
        <dbReference type="HAMAP-Rule" id="MF_01337"/>
    </source>
</evidence>
<evidence type="ECO:0000305" key="2"/>
<accession>Q6MSP1</accession>
<reference key="1">
    <citation type="journal article" date="2004" name="Genome Res.">
        <title>The genome sequence of Mycoplasma mycoides subsp. mycoides SC type strain PG1T, the causative agent of contagious bovine pleuropneumonia (CBPP).</title>
        <authorList>
            <person name="Westberg J."/>
            <person name="Persson A."/>
            <person name="Holmberg A."/>
            <person name="Goesmann A."/>
            <person name="Lundeberg J."/>
            <person name="Johansson K.-E."/>
            <person name="Pettersson B."/>
            <person name="Uhlen M."/>
        </authorList>
    </citation>
    <scope>NUCLEOTIDE SEQUENCE [LARGE SCALE GENOMIC DNA]</scope>
    <source>
        <strain>CCUG 32753 / NCTC 10114 / PG1</strain>
    </source>
</reference>
<gene>
    <name evidence="1" type="primary">rplR</name>
    <name type="ordered locus">MSC_0729</name>
</gene>
<feature type="chain" id="PRO_0000131300" description="Large ribosomal subunit protein uL18">
    <location>
        <begin position="1"/>
        <end position="116"/>
    </location>
</feature>
<protein>
    <recommendedName>
        <fullName evidence="1">Large ribosomal subunit protein uL18</fullName>
    </recommendedName>
    <alternativeName>
        <fullName evidence="2">50S ribosomal protein L18</fullName>
    </alternativeName>
</protein>
<organism>
    <name type="scientific">Mycoplasma mycoides subsp. mycoides SC (strain CCUG 32753 / NCTC 10114 / PG1)</name>
    <dbReference type="NCBI Taxonomy" id="272632"/>
    <lineage>
        <taxon>Bacteria</taxon>
        <taxon>Bacillati</taxon>
        <taxon>Mycoplasmatota</taxon>
        <taxon>Mollicutes</taxon>
        <taxon>Mycoplasmataceae</taxon>
        <taxon>Mycoplasma</taxon>
    </lineage>
</organism>
<name>RL18_MYCMS</name>
<keyword id="KW-1185">Reference proteome</keyword>
<keyword id="KW-0687">Ribonucleoprotein</keyword>
<keyword id="KW-0689">Ribosomal protein</keyword>
<keyword id="KW-0694">RNA-binding</keyword>
<keyword id="KW-0699">rRNA-binding</keyword>
<dbReference type="EMBL" id="BX293980">
    <property type="protein sequence ID" value="CAE77347.1"/>
    <property type="molecule type" value="Genomic_DNA"/>
</dbReference>
<dbReference type="RefSeq" id="NP_975705.1">
    <property type="nucleotide sequence ID" value="NC_005364.2"/>
</dbReference>
<dbReference type="RefSeq" id="WP_011166897.1">
    <property type="nucleotide sequence ID" value="NC_005364.2"/>
</dbReference>
<dbReference type="SMR" id="Q6MSP1"/>
<dbReference type="STRING" id="272632.MSC_0729"/>
<dbReference type="GeneID" id="93426149"/>
<dbReference type="KEGG" id="mmy:MSC_0729"/>
<dbReference type="PATRIC" id="fig|272632.4.peg.786"/>
<dbReference type="eggNOG" id="COG0256">
    <property type="taxonomic scope" value="Bacteria"/>
</dbReference>
<dbReference type="HOGENOM" id="CLU_098841_0_1_14"/>
<dbReference type="Proteomes" id="UP000001016">
    <property type="component" value="Chromosome"/>
</dbReference>
<dbReference type="GO" id="GO:0022625">
    <property type="term" value="C:cytosolic large ribosomal subunit"/>
    <property type="evidence" value="ECO:0007669"/>
    <property type="project" value="TreeGrafter"/>
</dbReference>
<dbReference type="GO" id="GO:0008097">
    <property type="term" value="F:5S rRNA binding"/>
    <property type="evidence" value="ECO:0007669"/>
    <property type="project" value="TreeGrafter"/>
</dbReference>
<dbReference type="GO" id="GO:0003735">
    <property type="term" value="F:structural constituent of ribosome"/>
    <property type="evidence" value="ECO:0007669"/>
    <property type="project" value="InterPro"/>
</dbReference>
<dbReference type="GO" id="GO:0006412">
    <property type="term" value="P:translation"/>
    <property type="evidence" value="ECO:0007669"/>
    <property type="project" value="UniProtKB-UniRule"/>
</dbReference>
<dbReference type="CDD" id="cd00432">
    <property type="entry name" value="Ribosomal_L18_L5e"/>
    <property type="match status" value="1"/>
</dbReference>
<dbReference type="FunFam" id="3.30.420.100:FF:000001">
    <property type="entry name" value="50S ribosomal protein L18"/>
    <property type="match status" value="1"/>
</dbReference>
<dbReference type="Gene3D" id="3.30.420.100">
    <property type="match status" value="1"/>
</dbReference>
<dbReference type="HAMAP" id="MF_01337_B">
    <property type="entry name" value="Ribosomal_uL18_B"/>
    <property type="match status" value="1"/>
</dbReference>
<dbReference type="InterPro" id="IPR004389">
    <property type="entry name" value="Ribosomal_uL18_bac-type"/>
</dbReference>
<dbReference type="InterPro" id="IPR005484">
    <property type="entry name" value="Ribosomal_uL18_bac/euk"/>
</dbReference>
<dbReference type="NCBIfam" id="TIGR00060">
    <property type="entry name" value="L18_bact"/>
    <property type="match status" value="1"/>
</dbReference>
<dbReference type="PANTHER" id="PTHR12899">
    <property type="entry name" value="39S RIBOSOMAL PROTEIN L18, MITOCHONDRIAL"/>
    <property type="match status" value="1"/>
</dbReference>
<dbReference type="PANTHER" id="PTHR12899:SF3">
    <property type="entry name" value="LARGE RIBOSOMAL SUBUNIT PROTEIN UL18M"/>
    <property type="match status" value="1"/>
</dbReference>
<dbReference type="Pfam" id="PF00861">
    <property type="entry name" value="Ribosomal_L18p"/>
    <property type="match status" value="1"/>
</dbReference>
<dbReference type="SUPFAM" id="SSF53137">
    <property type="entry name" value="Translational machinery components"/>
    <property type="match status" value="1"/>
</dbReference>
<proteinExistence type="inferred from homology"/>
<sequence>MKFTKAEARKRRHFRVRQKVVGTAERPRLNVFKSNTNFYAQIIDDTKGVTLVSASTLKMDLKSKSNTLAAQKVAEEIAKKALAANITQVVFDRNGYLYHGKIKAFAETARENGLKF</sequence>
<comment type="function">
    <text evidence="1">This is one of the proteins that bind and probably mediate the attachment of the 5S RNA into the large ribosomal subunit, where it forms part of the central protuberance.</text>
</comment>
<comment type="subunit">
    <text evidence="1">Part of the 50S ribosomal subunit; part of the 5S rRNA/L5/L18/L25 subcomplex. Contacts the 5S and 23S rRNAs.</text>
</comment>
<comment type="similarity">
    <text evidence="1">Belongs to the universal ribosomal protein uL18 family.</text>
</comment>